<reference key="1">
    <citation type="submission" date="2004-11" db="EMBL/GenBank/DDBJ databases">
        <authorList>
            <consortium name="The German cDNA consortium"/>
        </authorList>
    </citation>
    <scope>NUCLEOTIDE SEQUENCE [LARGE SCALE MRNA]</scope>
    <source>
        <tissue>Brain cortex</tissue>
    </source>
</reference>
<comment type="function">
    <text evidence="2">Catalyzes the reduction of prostaglandin-ethanolamide H(2) (prostamide H(2)) to prostamide F(2alpha) with NADPH as proton donor. Also able to reduce prostaglandin H(2) to prostaglandin F(2alpha) (By similarity).</text>
</comment>
<comment type="catalytic activity">
    <reaction evidence="2">
        <text>prostaglandin H2 + [thioredoxin]-dithiol = prostaglandin F2alpha + [thioredoxin]-disulfide</text>
        <dbReference type="Rhea" id="RHEA:28214"/>
        <dbReference type="Rhea" id="RHEA-COMP:10698"/>
        <dbReference type="Rhea" id="RHEA-COMP:10700"/>
        <dbReference type="ChEBI" id="CHEBI:29950"/>
        <dbReference type="ChEBI" id="CHEBI:50058"/>
        <dbReference type="ChEBI" id="CHEBI:57404"/>
        <dbReference type="ChEBI" id="CHEBI:57405"/>
        <dbReference type="EC" id="1.11.1.20"/>
    </reaction>
</comment>
<comment type="catalytic activity">
    <reaction evidence="2">
        <text>prostamide F2alpha + [thioredoxin]-disulfide = prostamide H2 + [thioredoxin]-dithiol</text>
        <dbReference type="Rhea" id="RHEA:26373"/>
        <dbReference type="Rhea" id="RHEA-COMP:10698"/>
        <dbReference type="Rhea" id="RHEA-COMP:10700"/>
        <dbReference type="ChEBI" id="CHEBI:29950"/>
        <dbReference type="ChEBI" id="CHEBI:50058"/>
        <dbReference type="ChEBI" id="CHEBI:53081"/>
        <dbReference type="ChEBI" id="CHEBI:53082"/>
        <dbReference type="EC" id="1.11.1.20"/>
    </reaction>
</comment>
<comment type="subcellular location">
    <subcellularLocation>
        <location evidence="2">Cytoplasm</location>
        <location evidence="2">Cytosol</location>
    </subcellularLocation>
</comment>
<comment type="similarity">
    <text evidence="3">Belongs to the peroxiredoxin-like PRXL2 family. Prostamide/prostaglandin F synthase subfamily.</text>
</comment>
<gene>
    <name type="primary">PRXL2B</name>
    <name type="synonym">FAM213B</name>
</gene>
<feature type="chain" id="PRO_0000284639" description="Prostamide/prostaglandin F synthase">
    <location>
        <begin position="1"/>
        <end position="198"/>
    </location>
</feature>
<feature type="modified residue" description="Phosphotyrosine" evidence="1">
    <location>
        <position position="108"/>
    </location>
</feature>
<accession>Q5R7S9</accession>
<organism>
    <name type="scientific">Pongo abelii</name>
    <name type="common">Sumatran orangutan</name>
    <name type="synonym">Pongo pygmaeus abelii</name>
    <dbReference type="NCBI Taxonomy" id="9601"/>
    <lineage>
        <taxon>Eukaryota</taxon>
        <taxon>Metazoa</taxon>
        <taxon>Chordata</taxon>
        <taxon>Craniata</taxon>
        <taxon>Vertebrata</taxon>
        <taxon>Euteleostomi</taxon>
        <taxon>Mammalia</taxon>
        <taxon>Eutheria</taxon>
        <taxon>Euarchontoglires</taxon>
        <taxon>Primates</taxon>
        <taxon>Haplorrhini</taxon>
        <taxon>Catarrhini</taxon>
        <taxon>Hominidae</taxon>
        <taxon>Pongo</taxon>
    </lineage>
</organism>
<proteinExistence type="evidence at transcript level"/>
<dbReference type="EC" id="1.11.1.20" evidence="2"/>
<dbReference type="EMBL" id="CR860030">
    <property type="protein sequence ID" value="CAH92181.1"/>
    <property type="molecule type" value="mRNA"/>
</dbReference>
<dbReference type="RefSeq" id="NP_001128963.1">
    <property type="nucleotide sequence ID" value="NM_001135491.1"/>
</dbReference>
<dbReference type="SMR" id="Q5R7S9"/>
<dbReference type="FunCoup" id="Q5R7S9">
    <property type="interactions" value="103"/>
</dbReference>
<dbReference type="STRING" id="9601.ENSPPYP00000002288"/>
<dbReference type="GeneID" id="100190803"/>
<dbReference type="KEGG" id="pon:100190803"/>
<dbReference type="CTD" id="127281"/>
<dbReference type="eggNOG" id="KOG4498">
    <property type="taxonomic scope" value="Eukaryota"/>
</dbReference>
<dbReference type="InParanoid" id="Q5R7S9"/>
<dbReference type="OrthoDB" id="40334at2759"/>
<dbReference type="Proteomes" id="UP000001595">
    <property type="component" value="Unplaced"/>
</dbReference>
<dbReference type="GO" id="GO:0005737">
    <property type="term" value="C:cytoplasm"/>
    <property type="evidence" value="ECO:0000250"/>
    <property type="project" value="CAFA"/>
</dbReference>
<dbReference type="GO" id="GO:0005829">
    <property type="term" value="C:cytosol"/>
    <property type="evidence" value="ECO:0007669"/>
    <property type="project" value="UniProtKB-SubCell"/>
</dbReference>
<dbReference type="GO" id="GO:0005783">
    <property type="term" value="C:endoplasmic reticulum"/>
    <property type="evidence" value="ECO:0000250"/>
    <property type="project" value="CAFA"/>
</dbReference>
<dbReference type="GO" id="GO:0043209">
    <property type="term" value="C:myelin sheath"/>
    <property type="evidence" value="ECO:0000250"/>
    <property type="project" value="CAFA"/>
</dbReference>
<dbReference type="GO" id="GO:0016616">
    <property type="term" value="F:oxidoreductase activity, acting on the CH-OH group of donors, NAD or NADP as acceptor"/>
    <property type="evidence" value="ECO:0000250"/>
    <property type="project" value="UniProtKB"/>
</dbReference>
<dbReference type="GO" id="GO:0047017">
    <property type="term" value="F:prostaglandin F synthase activity"/>
    <property type="evidence" value="ECO:0000250"/>
    <property type="project" value="CAFA"/>
</dbReference>
<dbReference type="GO" id="GO:0001516">
    <property type="term" value="P:prostaglandin biosynthetic process"/>
    <property type="evidence" value="ECO:0000250"/>
    <property type="project" value="UniProtKB"/>
</dbReference>
<dbReference type="CDD" id="cd02970">
    <property type="entry name" value="PRX_like2"/>
    <property type="match status" value="1"/>
</dbReference>
<dbReference type="FunFam" id="3.40.30.10:FF:000243">
    <property type="entry name" value="Prostamide/prostaglandin F synthase"/>
    <property type="match status" value="1"/>
</dbReference>
<dbReference type="InterPro" id="IPR032801">
    <property type="entry name" value="PXL2A/B/C"/>
</dbReference>
<dbReference type="InterPro" id="IPR036249">
    <property type="entry name" value="Thioredoxin-like_sf"/>
</dbReference>
<dbReference type="PANTHER" id="PTHR28630">
    <property type="match status" value="1"/>
</dbReference>
<dbReference type="PANTHER" id="PTHR28630:SF29">
    <property type="entry name" value="PROSTAMIDE_PROSTAGLANDIN F SYNTHASE"/>
    <property type="match status" value="1"/>
</dbReference>
<dbReference type="Pfam" id="PF13911">
    <property type="entry name" value="AhpC-TSA_2"/>
    <property type="match status" value="1"/>
</dbReference>
<dbReference type="SUPFAM" id="SSF52833">
    <property type="entry name" value="Thioredoxin-like"/>
    <property type="match status" value="1"/>
</dbReference>
<name>PXL2B_PONAB</name>
<keyword id="KW-0963">Cytoplasm</keyword>
<keyword id="KW-0275">Fatty acid biosynthesis</keyword>
<keyword id="KW-0276">Fatty acid metabolism</keyword>
<keyword id="KW-0444">Lipid biosynthesis</keyword>
<keyword id="KW-0443">Lipid metabolism</keyword>
<keyword id="KW-0521">NADP</keyword>
<keyword id="KW-0560">Oxidoreductase</keyword>
<keyword id="KW-0597">Phosphoprotein</keyword>
<keyword id="KW-0643">Prostaglandin biosynthesis</keyword>
<keyword id="KW-0644">Prostaglandin metabolism</keyword>
<keyword id="KW-1185">Reference proteome</keyword>
<sequence>MSTVDLARVGACILKHAVTGEAVELRSLWRERACVVAGLRRFGCVVCRWIAQDLSSLAGLLDQHGVRLVGVGPEALGLQEFLDGDYFAGELYLDESKQLYNELGFKRYNSPSILPAALGKPVRDVAAKAKAVGIQGNLSGDLLQSGGLLVVSKGGDKVLLHFVQKSPGDYVPKEHILQVLGISAEVCASNPPQCDREA</sequence>
<protein>
    <recommendedName>
        <fullName>Prostamide/prostaglandin F synthase</fullName>
        <shortName>Prostamide/PG F synthase</shortName>
        <shortName>Prostamide/PGF synthase</shortName>
        <ecNumber evidence="2">1.11.1.20</ecNumber>
    </recommendedName>
    <alternativeName>
        <fullName>Peroxiredoxin-like 2B</fullName>
    </alternativeName>
</protein>
<evidence type="ECO:0000250" key="1">
    <source>
        <dbReference type="UniProtKB" id="Q8TBF2"/>
    </source>
</evidence>
<evidence type="ECO:0000250" key="2">
    <source>
        <dbReference type="UniProtKB" id="Q9DB60"/>
    </source>
</evidence>
<evidence type="ECO:0000305" key="3"/>